<proteinExistence type="inferred from homology"/>
<reference key="1">
    <citation type="journal article" date="2006" name="J. Bacteriol.">
        <title>The genome sequence of the obligately chemolithoautotrophic, facultatively anaerobic bacterium Thiobacillus denitrificans.</title>
        <authorList>
            <person name="Beller H.R."/>
            <person name="Chain P.S."/>
            <person name="Letain T.E."/>
            <person name="Chakicherla A."/>
            <person name="Larimer F.W."/>
            <person name="Richardson P.M."/>
            <person name="Coleman M.A."/>
            <person name="Wood A.P."/>
            <person name="Kelly D.P."/>
        </authorList>
    </citation>
    <scope>NUCLEOTIDE SEQUENCE [LARGE SCALE GENOMIC DNA]</scope>
    <source>
        <strain>ATCC 25259 / T1</strain>
    </source>
</reference>
<gene>
    <name evidence="1" type="primary">hemA</name>
    <name type="ordered locus">Tbd_2492</name>
</gene>
<name>HEM1_THIDA</name>
<dbReference type="EC" id="1.2.1.70" evidence="1"/>
<dbReference type="EMBL" id="CP000116">
    <property type="protein sequence ID" value="AAZ98445.1"/>
    <property type="molecule type" value="Genomic_DNA"/>
</dbReference>
<dbReference type="RefSeq" id="WP_011313004.1">
    <property type="nucleotide sequence ID" value="NC_007404.1"/>
</dbReference>
<dbReference type="SMR" id="Q3SG11"/>
<dbReference type="STRING" id="292415.Tbd_2492"/>
<dbReference type="KEGG" id="tbd:Tbd_2492"/>
<dbReference type="eggNOG" id="COG0373">
    <property type="taxonomic scope" value="Bacteria"/>
</dbReference>
<dbReference type="HOGENOM" id="CLU_035113_2_2_4"/>
<dbReference type="OrthoDB" id="110209at2"/>
<dbReference type="UniPathway" id="UPA00251">
    <property type="reaction ID" value="UER00316"/>
</dbReference>
<dbReference type="Proteomes" id="UP000008291">
    <property type="component" value="Chromosome"/>
</dbReference>
<dbReference type="GO" id="GO:0008883">
    <property type="term" value="F:glutamyl-tRNA reductase activity"/>
    <property type="evidence" value="ECO:0007669"/>
    <property type="project" value="UniProtKB-UniRule"/>
</dbReference>
<dbReference type="GO" id="GO:0050661">
    <property type="term" value="F:NADP binding"/>
    <property type="evidence" value="ECO:0007669"/>
    <property type="project" value="InterPro"/>
</dbReference>
<dbReference type="GO" id="GO:0019353">
    <property type="term" value="P:protoporphyrinogen IX biosynthetic process from glutamate"/>
    <property type="evidence" value="ECO:0007669"/>
    <property type="project" value="TreeGrafter"/>
</dbReference>
<dbReference type="CDD" id="cd05213">
    <property type="entry name" value="NAD_bind_Glutamyl_tRNA_reduct"/>
    <property type="match status" value="1"/>
</dbReference>
<dbReference type="FunFam" id="3.30.460.30:FF:000001">
    <property type="entry name" value="Glutamyl-tRNA reductase"/>
    <property type="match status" value="1"/>
</dbReference>
<dbReference type="FunFam" id="3.40.50.720:FF:000031">
    <property type="entry name" value="Glutamyl-tRNA reductase"/>
    <property type="match status" value="1"/>
</dbReference>
<dbReference type="Gene3D" id="3.30.460.30">
    <property type="entry name" value="Glutamyl-tRNA reductase, N-terminal domain"/>
    <property type="match status" value="1"/>
</dbReference>
<dbReference type="Gene3D" id="3.40.50.720">
    <property type="entry name" value="NAD(P)-binding Rossmann-like Domain"/>
    <property type="match status" value="1"/>
</dbReference>
<dbReference type="HAMAP" id="MF_00087">
    <property type="entry name" value="Glu_tRNA_reductase"/>
    <property type="match status" value="1"/>
</dbReference>
<dbReference type="InterPro" id="IPR000343">
    <property type="entry name" value="4pyrrol_synth_GluRdtase"/>
</dbReference>
<dbReference type="InterPro" id="IPR015896">
    <property type="entry name" value="4pyrrol_synth_GluRdtase_dimer"/>
</dbReference>
<dbReference type="InterPro" id="IPR015895">
    <property type="entry name" value="4pyrrol_synth_GluRdtase_N"/>
</dbReference>
<dbReference type="InterPro" id="IPR018214">
    <property type="entry name" value="GluRdtase_CS"/>
</dbReference>
<dbReference type="InterPro" id="IPR036453">
    <property type="entry name" value="GluRdtase_dimer_dom_sf"/>
</dbReference>
<dbReference type="InterPro" id="IPR036343">
    <property type="entry name" value="GluRdtase_N_sf"/>
</dbReference>
<dbReference type="InterPro" id="IPR036291">
    <property type="entry name" value="NAD(P)-bd_dom_sf"/>
</dbReference>
<dbReference type="InterPro" id="IPR006151">
    <property type="entry name" value="Shikm_DH/Glu-tRNA_Rdtase"/>
</dbReference>
<dbReference type="NCBIfam" id="TIGR01035">
    <property type="entry name" value="hemA"/>
    <property type="match status" value="1"/>
</dbReference>
<dbReference type="PANTHER" id="PTHR43013">
    <property type="entry name" value="GLUTAMYL-TRNA REDUCTASE"/>
    <property type="match status" value="1"/>
</dbReference>
<dbReference type="PANTHER" id="PTHR43013:SF1">
    <property type="entry name" value="GLUTAMYL-TRNA REDUCTASE"/>
    <property type="match status" value="1"/>
</dbReference>
<dbReference type="Pfam" id="PF00745">
    <property type="entry name" value="GlutR_dimer"/>
    <property type="match status" value="1"/>
</dbReference>
<dbReference type="Pfam" id="PF05201">
    <property type="entry name" value="GlutR_N"/>
    <property type="match status" value="1"/>
</dbReference>
<dbReference type="Pfam" id="PF01488">
    <property type="entry name" value="Shikimate_DH"/>
    <property type="match status" value="1"/>
</dbReference>
<dbReference type="PIRSF" id="PIRSF000445">
    <property type="entry name" value="4pyrrol_synth_GluRdtase"/>
    <property type="match status" value="1"/>
</dbReference>
<dbReference type="SUPFAM" id="SSF69742">
    <property type="entry name" value="Glutamyl tRNA-reductase catalytic, N-terminal domain"/>
    <property type="match status" value="1"/>
</dbReference>
<dbReference type="SUPFAM" id="SSF69075">
    <property type="entry name" value="Glutamyl tRNA-reductase dimerization domain"/>
    <property type="match status" value="1"/>
</dbReference>
<dbReference type="SUPFAM" id="SSF51735">
    <property type="entry name" value="NAD(P)-binding Rossmann-fold domains"/>
    <property type="match status" value="1"/>
</dbReference>
<dbReference type="PROSITE" id="PS00747">
    <property type="entry name" value="GLUTR"/>
    <property type="match status" value="1"/>
</dbReference>
<protein>
    <recommendedName>
        <fullName evidence="1">Glutamyl-tRNA reductase</fullName>
        <shortName evidence="1">GluTR</shortName>
        <ecNumber evidence="1">1.2.1.70</ecNumber>
    </recommendedName>
</protein>
<accession>Q3SG11</accession>
<feature type="chain" id="PRO_0000335078" description="Glutamyl-tRNA reductase">
    <location>
        <begin position="1"/>
        <end position="416"/>
    </location>
</feature>
<feature type="active site" description="Nucleophile" evidence="1">
    <location>
        <position position="50"/>
    </location>
</feature>
<feature type="binding site" evidence="1">
    <location>
        <begin position="49"/>
        <end position="52"/>
    </location>
    <ligand>
        <name>substrate</name>
    </ligand>
</feature>
<feature type="binding site" evidence="1">
    <location>
        <position position="105"/>
    </location>
    <ligand>
        <name>substrate</name>
    </ligand>
</feature>
<feature type="binding site" evidence="1">
    <location>
        <begin position="110"/>
        <end position="112"/>
    </location>
    <ligand>
        <name>substrate</name>
    </ligand>
</feature>
<feature type="binding site" evidence="1">
    <location>
        <position position="116"/>
    </location>
    <ligand>
        <name>substrate</name>
    </ligand>
</feature>
<feature type="binding site" evidence="1">
    <location>
        <begin position="185"/>
        <end position="190"/>
    </location>
    <ligand>
        <name>NADP(+)</name>
        <dbReference type="ChEBI" id="CHEBI:58349"/>
    </ligand>
</feature>
<feature type="site" description="Important for activity" evidence="1">
    <location>
        <position position="95"/>
    </location>
</feature>
<evidence type="ECO:0000255" key="1">
    <source>
        <dbReference type="HAMAP-Rule" id="MF_00087"/>
    </source>
</evidence>
<keyword id="KW-0521">NADP</keyword>
<keyword id="KW-0560">Oxidoreductase</keyword>
<keyword id="KW-0627">Porphyrin biosynthesis</keyword>
<keyword id="KW-1185">Reference proteome</keyword>
<comment type="function">
    <text evidence="1">Catalyzes the NADPH-dependent reduction of glutamyl-tRNA(Glu) to glutamate 1-semialdehyde (GSA).</text>
</comment>
<comment type="catalytic activity">
    <reaction evidence="1">
        <text>(S)-4-amino-5-oxopentanoate + tRNA(Glu) + NADP(+) = L-glutamyl-tRNA(Glu) + NADPH + H(+)</text>
        <dbReference type="Rhea" id="RHEA:12344"/>
        <dbReference type="Rhea" id="RHEA-COMP:9663"/>
        <dbReference type="Rhea" id="RHEA-COMP:9680"/>
        <dbReference type="ChEBI" id="CHEBI:15378"/>
        <dbReference type="ChEBI" id="CHEBI:57501"/>
        <dbReference type="ChEBI" id="CHEBI:57783"/>
        <dbReference type="ChEBI" id="CHEBI:58349"/>
        <dbReference type="ChEBI" id="CHEBI:78442"/>
        <dbReference type="ChEBI" id="CHEBI:78520"/>
        <dbReference type="EC" id="1.2.1.70"/>
    </reaction>
</comment>
<comment type="pathway">
    <text evidence="1">Porphyrin-containing compound metabolism; protoporphyrin-IX biosynthesis; 5-aminolevulinate from L-glutamyl-tRNA(Glu): step 1/2.</text>
</comment>
<comment type="subunit">
    <text evidence="1">Homodimer.</text>
</comment>
<comment type="domain">
    <text evidence="1">Possesses an unusual extended V-shaped dimeric structure with each monomer consisting of three distinct domains arranged along a curved 'spinal' alpha-helix. The N-terminal catalytic domain specifically recognizes the glutamate moiety of the substrate. The second domain is the NADPH-binding domain, and the third C-terminal domain is responsible for dimerization.</text>
</comment>
<comment type="miscellaneous">
    <text evidence="1">During catalysis, the active site Cys acts as a nucleophile attacking the alpha-carbonyl group of tRNA-bound glutamate with the formation of a thioester intermediate between enzyme and glutamate, and the concomitant release of tRNA(Glu). The thioester intermediate is finally reduced by direct hydride transfer from NADPH, to form the product GSA.</text>
</comment>
<comment type="similarity">
    <text evidence="1">Belongs to the glutamyl-tRNA reductase family.</text>
</comment>
<sequence length="416" mass="45872">MQLLTLGVNHHTAPLAIREQVAFGPDKLVQALHELTLSKRASEAAILSTCNRTELYVNTVSPDALSQWFADFHHLDVRELAPYLYTLPREKAAQHAFRVAAGLDSMVLGETQILGQMKQAVAAAEEAGTLGLLLHKLFQRTFSVAKEVRSSTEIGANSVSMAAAAVRLAERIFPSVKEQACLFIGAGEMIELCMTHFAAQHPRRMTVANRTTERARPLAERFNAGVIPLTALPDEVAAYDIIITSTASPLPILGKGMLERAIRQRRHRPIFIVDLAVPRDVEAEVADMNDVFLYSVDDLGQVVREGMDNRVAQVAQAEAIIETSVASFIHWMEGRELVPVIRGLRDAAERHRRHELDKAHKALARGDDPHAVLDAMSHGLANKFLHAPTHGLSHATPEERAELVRLISQLYGLHPE</sequence>
<organism>
    <name type="scientific">Thiobacillus denitrificans (strain ATCC 25259 / T1)</name>
    <dbReference type="NCBI Taxonomy" id="292415"/>
    <lineage>
        <taxon>Bacteria</taxon>
        <taxon>Pseudomonadati</taxon>
        <taxon>Pseudomonadota</taxon>
        <taxon>Betaproteobacteria</taxon>
        <taxon>Nitrosomonadales</taxon>
        <taxon>Thiobacillaceae</taxon>
        <taxon>Thiobacillus</taxon>
    </lineage>
</organism>